<comment type="function">
    <text evidence="1">Endonuclease that specifically degrades the RNA of RNA-DNA hybrids.</text>
</comment>
<comment type="catalytic activity">
    <reaction>
        <text>Endonucleolytic cleavage to 5'-phosphomonoester.</text>
        <dbReference type="EC" id="3.1.26.4"/>
    </reaction>
</comment>
<comment type="cofactor">
    <cofactor evidence="1">
        <name>Mn(2+)</name>
        <dbReference type="ChEBI" id="CHEBI:29035"/>
    </cofactor>
    <cofactor evidence="1">
        <name>Mg(2+)</name>
        <dbReference type="ChEBI" id="CHEBI:18420"/>
    </cofactor>
    <text evidence="1">Manganese or magnesium. Binds 1 divalent metal ion per monomer in the absence of substrate. May bind a second metal ion after substrate binding.</text>
</comment>
<comment type="subcellular location">
    <subcellularLocation>
        <location evidence="3">Cytoplasm</location>
    </subcellularLocation>
</comment>
<comment type="similarity">
    <text evidence="3">Belongs to the RNase HII family.</text>
</comment>
<keyword id="KW-0963">Cytoplasm</keyword>
<keyword id="KW-0255">Endonuclease</keyword>
<keyword id="KW-0378">Hydrolase</keyword>
<keyword id="KW-0464">Manganese</keyword>
<keyword id="KW-0479">Metal-binding</keyword>
<keyword id="KW-0540">Nuclease</keyword>
<keyword id="KW-1185">Reference proteome</keyword>
<organism>
    <name type="scientific">Aquifex aeolicus (strain VF5)</name>
    <dbReference type="NCBI Taxonomy" id="224324"/>
    <lineage>
        <taxon>Bacteria</taxon>
        <taxon>Pseudomonadati</taxon>
        <taxon>Aquificota</taxon>
        <taxon>Aquificia</taxon>
        <taxon>Aquificales</taxon>
        <taxon>Aquificaceae</taxon>
        <taxon>Aquifex</taxon>
    </lineage>
</organism>
<proteinExistence type="inferred from homology"/>
<accession>O67768</accession>
<protein>
    <recommendedName>
        <fullName>Ribonuclease HII</fullName>
        <shortName>RNase HII</shortName>
        <ecNumber>3.1.26.4</ecNumber>
    </recommendedName>
</protein>
<name>RNH2_AQUAE</name>
<feature type="chain" id="PRO_0000111534" description="Ribonuclease HII">
    <location>
        <begin position="1"/>
        <end position="196"/>
    </location>
</feature>
<feature type="domain" description="RNase H type-2" evidence="2">
    <location>
        <begin position="13"/>
        <end position="196"/>
    </location>
</feature>
<feature type="binding site" evidence="1">
    <location>
        <position position="19"/>
    </location>
    <ligand>
        <name>a divalent metal cation</name>
        <dbReference type="ChEBI" id="CHEBI:60240"/>
    </ligand>
</feature>
<feature type="binding site" evidence="1">
    <location>
        <position position="20"/>
    </location>
    <ligand>
        <name>a divalent metal cation</name>
        <dbReference type="ChEBI" id="CHEBI:60240"/>
    </ligand>
</feature>
<feature type="binding site" evidence="1">
    <location>
        <position position="111"/>
    </location>
    <ligand>
        <name>a divalent metal cation</name>
        <dbReference type="ChEBI" id="CHEBI:60240"/>
    </ligand>
</feature>
<gene>
    <name type="primary">rnhB</name>
    <name type="ordered locus">aq_1955</name>
</gene>
<evidence type="ECO:0000250" key="1"/>
<evidence type="ECO:0000255" key="2">
    <source>
        <dbReference type="PROSITE-ProRule" id="PRU01319"/>
    </source>
</evidence>
<evidence type="ECO:0000305" key="3"/>
<sequence length="196" mass="22045">MLNYELELWEKGLLVAGVDEAGRGPLAGPVVAAAVILPPFTEPFIKGDSKKLTKKEREEAYEEIKNKALAVGTAVVDSAVIDRVNILRATKLAMKRALKDLKYHYDIVITDYVKLEGENCMPLVKGDEKSLNCACASIIAKVIRDKIMEIYHKIYPDFNFASNKGYPSKTHLEKVEKGEYTEIHRKSFSPLKKKLF</sequence>
<dbReference type="EC" id="3.1.26.4"/>
<dbReference type="EMBL" id="AE000657">
    <property type="protein sequence ID" value="AAC07736.1"/>
    <property type="molecule type" value="Genomic_DNA"/>
</dbReference>
<dbReference type="PIR" id="D70467">
    <property type="entry name" value="D70467"/>
</dbReference>
<dbReference type="RefSeq" id="NP_214337.1">
    <property type="nucleotide sequence ID" value="NC_000918.1"/>
</dbReference>
<dbReference type="RefSeq" id="WP_010881273.1">
    <property type="nucleotide sequence ID" value="NC_000918.1"/>
</dbReference>
<dbReference type="SMR" id="O67768"/>
<dbReference type="FunCoup" id="O67768">
    <property type="interactions" value="279"/>
</dbReference>
<dbReference type="STRING" id="224324.aq_1955"/>
<dbReference type="EnsemblBacteria" id="AAC07736">
    <property type="protein sequence ID" value="AAC07736"/>
    <property type="gene ID" value="aq_1955"/>
</dbReference>
<dbReference type="KEGG" id="aae:aq_1955"/>
<dbReference type="PATRIC" id="fig|224324.8.peg.1507"/>
<dbReference type="eggNOG" id="COG0164">
    <property type="taxonomic scope" value="Bacteria"/>
</dbReference>
<dbReference type="HOGENOM" id="CLU_036532_2_1_0"/>
<dbReference type="InParanoid" id="O67768"/>
<dbReference type="OrthoDB" id="9803420at2"/>
<dbReference type="Proteomes" id="UP000000798">
    <property type="component" value="Chromosome"/>
</dbReference>
<dbReference type="GO" id="GO:0005737">
    <property type="term" value="C:cytoplasm"/>
    <property type="evidence" value="ECO:0007669"/>
    <property type="project" value="UniProtKB-SubCell"/>
</dbReference>
<dbReference type="GO" id="GO:0032299">
    <property type="term" value="C:ribonuclease H2 complex"/>
    <property type="evidence" value="ECO:0000318"/>
    <property type="project" value="GO_Central"/>
</dbReference>
<dbReference type="GO" id="GO:0030145">
    <property type="term" value="F:manganese ion binding"/>
    <property type="evidence" value="ECO:0007669"/>
    <property type="project" value="UniProtKB-UniRule"/>
</dbReference>
<dbReference type="GO" id="GO:0003723">
    <property type="term" value="F:RNA binding"/>
    <property type="evidence" value="ECO:0007669"/>
    <property type="project" value="InterPro"/>
</dbReference>
<dbReference type="GO" id="GO:0004523">
    <property type="term" value="F:RNA-DNA hybrid ribonuclease activity"/>
    <property type="evidence" value="ECO:0000318"/>
    <property type="project" value="GO_Central"/>
</dbReference>
<dbReference type="GO" id="GO:0043137">
    <property type="term" value="P:DNA replication, removal of RNA primer"/>
    <property type="evidence" value="ECO:0000318"/>
    <property type="project" value="GO_Central"/>
</dbReference>
<dbReference type="GO" id="GO:0006298">
    <property type="term" value="P:mismatch repair"/>
    <property type="evidence" value="ECO:0000318"/>
    <property type="project" value="GO_Central"/>
</dbReference>
<dbReference type="CDD" id="cd07182">
    <property type="entry name" value="RNase_HII_bacteria_HII_like"/>
    <property type="match status" value="1"/>
</dbReference>
<dbReference type="FunFam" id="3.30.420.10:FF:000078">
    <property type="entry name" value="Ribonuclease HII"/>
    <property type="match status" value="1"/>
</dbReference>
<dbReference type="Gene3D" id="3.30.420.10">
    <property type="entry name" value="Ribonuclease H-like superfamily/Ribonuclease H"/>
    <property type="match status" value="1"/>
</dbReference>
<dbReference type="HAMAP" id="MF_00052_B">
    <property type="entry name" value="RNase_HII_B"/>
    <property type="match status" value="1"/>
</dbReference>
<dbReference type="InterPro" id="IPR022898">
    <property type="entry name" value="RNase_HII"/>
</dbReference>
<dbReference type="InterPro" id="IPR001352">
    <property type="entry name" value="RNase_HII/HIII"/>
</dbReference>
<dbReference type="InterPro" id="IPR024567">
    <property type="entry name" value="RNase_HII/HIII_dom"/>
</dbReference>
<dbReference type="InterPro" id="IPR012337">
    <property type="entry name" value="RNaseH-like_sf"/>
</dbReference>
<dbReference type="InterPro" id="IPR036397">
    <property type="entry name" value="RNaseH_sf"/>
</dbReference>
<dbReference type="NCBIfam" id="NF000595">
    <property type="entry name" value="PRK00015.1-3"/>
    <property type="match status" value="1"/>
</dbReference>
<dbReference type="PANTHER" id="PTHR10954">
    <property type="entry name" value="RIBONUCLEASE H2 SUBUNIT A"/>
    <property type="match status" value="1"/>
</dbReference>
<dbReference type="PANTHER" id="PTHR10954:SF18">
    <property type="entry name" value="RIBONUCLEASE HII"/>
    <property type="match status" value="1"/>
</dbReference>
<dbReference type="Pfam" id="PF01351">
    <property type="entry name" value="RNase_HII"/>
    <property type="match status" value="1"/>
</dbReference>
<dbReference type="SUPFAM" id="SSF53098">
    <property type="entry name" value="Ribonuclease H-like"/>
    <property type="match status" value="1"/>
</dbReference>
<dbReference type="PROSITE" id="PS51975">
    <property type="entry name" value="RNASE_H_2"/>
    <property type="match status" value="1"/>
</dbReference>
<reference key="1">
    <citation type="journal article" date="1998" name="Nature">
        <title>The complete genome of the hyperthermophilic bacterium Aquifex aeolicus.</title>
        <authorList>
            <person name="Deckert G."/>
            <person name="Warren P.V."/>
            <person name="Gaasterland T."/>
            <person name="Young W.G."/>
            <person name="Lenox A.L."/>
            <person name="Graham D.E."/>
            <person name="Overbeek R."/>
            <person name="Snead M.A."/>
            <person name="Keller M."/>
            <person name="Aujay M."/>
            <person name="Huber R."/>
            <person name="Feldman R.A."/>
            <person name="Short J.M."/>
            <person name="Olsen G.J."/>
            <person name="Swanson R.V."/>
        </authorList>
    </citation>
    <scope>NUCLEOTIDE SEQUENCE [LARGE SCALE GENOMIC DNA]</scope>
    <source>
        <strain>VF5</strain>
    </source>
</reference>